<reference key="1">
    <citation type="journal article" date="1999" name="Nature">
        <title>Sequence and analysis of chromosome 2 of the plant Arabidopsis thaliana.</title>
        <authorList>
            <person name="Lin X."/>
            <person name="Kaul S."/>
            <person name="Rounsley S.D."/>
            <person name="Shea T.P."/>
            <person name="Benito M.-I."/>
            <person name="Town C.D."/>
            <person name="Fujii C.Y."/>
            <person name="Mason T.M."/>
            <person name="Bowman C.L."/>
            <person name="Barnstead M.E."/>
            <person name="Feldblyum T.V."/>
            <person name="Buell C.R."/>
            <person name="Ketchum K.A."/>
            <person name="Lee J.J."/>
            <person name="Ronning C.M."/>
            <person name="Koo H.L."/>
            <person name="Moffat K.S."/>
            <person name="Cronin L.A."/>
            <person name="Shen M."/>
            <person name="Pai G."/>
            <person name="Van Aken S."/>
            <person name="Umayam L."/>
            <person name="Tallon L.J."/>
            <person name="Gill J.E."/>
            <person name="Adams M.D."/>
            <person name="Carrera A.J."/>
            <person name="Creasy T.H."/>
            <person name="Goodman H.M."/>
            <person name="Somerville C.R."/>
            <person name="Copenhaver G.P."/>
            <person name="Preuss D."/>
            <person name="Nierman W.C."/>
            <person name="White O."/>
            <person name="Eisen J.A."/>
            <person name="Salzberg S.L."/>
            <person name="Fraser C.M."/>
            <person name="Venter J.C."/>
        </authorList>
    </citation>
    <scope>NUCLEOTIDE SEQUENCE [LARGE SCALE GENOMIC DNA]</scope>
    <source>
        <strain>cv. Columbia</strain>
    </source>
</reference>
<reference key="2">
    <citation type="journal article" date="2017" name="Plant J.">
        <title>Araport11: a complete reannotation of the Arabidopsis thaliana reference genome.</title>
        <authorList>
            <person name="Cheng C.Y."/>
            <person name="Krishnakumar V."/>
            <person name="Chan A.P."/>
            <person name="Thibaud-Nissen F."/>
            <person name="Schobel S."/>
            <person name="Town C.D."/>
        </authorList>
    </citation>
    <scope>GENOME REANNOTATION</scope>
    <source>
        <strain>cv. Columbia</strain>
    </source>
</reference>
<reference key="3">
    <citation type="journal article" date="2002" name="Science">
        <title>Functional annotation of a full-length Arabidopsis cDNA collection.</title>
        <authorList>
            <person name="Seki M."/>
            <person name="Narusaka M."/>
            <person name="Kamiya A."/>
            <person name="Ishida J."/>
            <person name="Satou M."/>
            <person name="Sakurai T."/>
            <person name="Nakajima M."/>
            <person name="Enju A."/>
            <person name="Akiyama K."/>
            <person name="Oono Y."/>
            <person name="Muramatsu M."/>
            <person name="Hayashizaki Y."/>
            <person name="Kawai J."/>
            <person name="Carninci P."/>
            <person name="Itoh M."/>
            <person name="Ishii Y."/>
            <person name="Arakawa T."/>
            <person name="Shibata K."/>
            <person name="Shinagawa A."/>
            <person name="Shinozaki K."/>
        </authorList>
    </citation>
    <scope>NUCLEOTIDE SEQUENCE [LARGE SCALE MRNA] OF 122-287</scope>
    <source>
        <strain>cv. Columbia</strain>
    </source>
</reference>
<reference key="4">
    <citation type="journal article" date="2003" name="Science">
        <title>Empirical analysis of transcriptional activity in the Arabidopsis genome.</title>
        <authorList>
            <person name="Yamada K."/>
            <person name="Lim J."/>
            <person name="Dale J.M."/>
            <person name="Chen H."/>
            <person name="Shinn P."/>
            <person name="Palm C.J."/>
            <person name="Southwick A.M."/>
            <person name="Wu H.C."/>
            <person name="Kim C.J."/>
            <person name="Nguyen M."/>
            <person name="Pham P.K."/>
            <person name="Cheuk R.F."/>
            <person name="Karlin-Newmann G."/>
            <person name="Liu S.X."/>
            <person name="Lam B."/>
            <person name="Sakano H."/>
            <person name="Wu T."/>
            <person name="Yu G."/>
            <person name="Miranda M."/>
            <person name="Quach H.L."/>
            <person name="Tripp M."/>
            <person name="Chang C.H."/>
            <person name="Lee J.M."/>
            <person name="Toriumi M.J."/>
            <person name="Chan M.M."/>
            <person name="Tang C.C."/>
            <person name="Onodera C.S."/>
            <person name="Deng J.M."/>
            <person name="Akiyama K."/>
            <person name="Ansari Y."/>
            <person name="Arakawa T."/>
            <person name="Banh J."/>
            <person name="Banno F."/>
            <person name="Bowser L."/>
            <person name="Brooks S.Y."/>
            <person name="Carninci P."/>
            <person name="Chao Q."/>
            <person name="Choy N."/>
            <person name="Enju A."/>
            <person name="Goldsmith A.D."/>
            <person name="Gurjal M."/>
            <person name="Hansen N.F."/>
            <person name="Hayashizaki Y."/>
            <person name="Johnson-Hopson C."/>
            <person name="Hsuan V.W."/>
            <person name="Iida K."/>
            <person name="Karnes M."/>
            <person name="Khan S."/>
            <person name="Koesema E."/>
            <person name="Ishida J."/>
            <person name="Jiang P.X."/>
            <person name="Jones T."/>
            <person name="Kawai J."/>
            <person name="Kamiya A."/>
            <person name="Meyers C."/>
            <person name="Nakajima M."/>
            <person name="Narusaka M."/>
            <person name="Seki M."/>
            <person name="Sakurai T."/>
            <person name="Satou M."/>
            <person name="Tamse R."/>
            <person name="Vaysberg M."/>
            <person name="Wallender E.K."/>
            <person name="Wong C."/>
            <person name="Yamamura Y."/>
            <person name="Yuan S."/>
            <person name="Shinozaki K."/>
            <person name="Davis R.W."/>
            <person name="Theologis A."/>
            <person name="Ecker J.R."/>
        </authorList>
    </citation>
    <scope>NUCLEOTIDE SEQUENCE [LARGE SCALE MRNA] OF 128-287</scope>
    <source>
        <strain>cv. Columbia</strain>
    </source>
</reference>
<reference key="5">
    <citation type="journal article" date="2008" name="Plant J.">
        <title>Characterization of a sub-family of Arabidopsis genes with the SPX domain reveals their diverse functions in plant tolerance to phosphorus starvation.</title>
        <authorList>
            <person name="Duan K."/>
            <person name="Yi K."/>
            <person name="Dang L."/>
            <person name="Huang H."/>
            <person name="Wu W."/>
            <person name="Wu P."/>
        </authorList>
    </citation>
    <scope>GENE FAMILY</scope>
    <scope>SUBCELLULAR LOCATION</scope>
    <scope>INDUCTION</scope>
</reference>
<reference key="6">
    <citation type="journal article" date="2014" name="Proc. Natl. Acad. Sci. U.S.A.">
        <title>SPX1 is a phosphate-dependent inhibitor of PHOSPHATE STARVATION RESPONSE 1 in Arabidopsis.</title>
        <authorList>
            <person name="Puga M.I."/>
            <person name="Mateos I."/>
            <person name="Charukesi R."/>
            <person name="Wang Z."/>
            <person name="Franco-Zorrilla J.M."/>
            <person name="de Lorenzo L."/>
            <person name="Irigoyen M.L."/>
            <person name="Masiero S."/>
            <person name="Bustos R."/>
            <person name="Rodriguez J."/>
            <person name="Leyva A."/>
            <person name="Rubio V."/>
            <person name="Sommer H."/>
            <person name="Paz-Ares J."/>
        </authorList>
    </citation>
    <scope>DISRUPTION PHENOTYPE</scope>
</reference>
<protein>
    <recommendedName>
        <fullName evidence="5">SPX domain-containing protein 2</fullName>
    </recommendedName>
    <alternativeName>
        <fullName evidence="5">Protein SPX DOMAIN GENE 2</fullName>
        <shortName evidence="5">AtSPX2</shortName>
    </alternativeName>
</protein>
<sequence length="287" mass="32989">MKFGKSLSNQIEETLPEWRDKFLSYKELKKKLKLMEPRSVENRPNKRSRSDSNSVDTDPTVGMTKEELDFISLLEDELEKFNSFFVEQEEEYIIRLKELKDQVAKAKNSNEEMINIKKEIVDFHGEMVLLMNYSALNYTGLAKILKKYDKRTGALIRLPFIQKVLQEPFFTTDLLNTFVKECEAMLDRLFPSNKSRNLDEEGEPTTSGMVKTGTDDSELLRVPKELSEIEYMESLYMKSTVSALKVLKEIRSGSSTVSVFSLPPLPASGLEDDSWKKKVGVLEQVAK</sequence>
<proteinExistence type="evidence at transcript level"/>
<name>SPX2_ARATH</name>
<accession>O48781</accession>
<accession>Q8GWZ3</accession>
<organism>
    <name type="scientific">Arabidopsis thaliana</name>
    <name type="common">Mouse-ear cress</name>
    <dbReference type="NCBI Taxonomy" id="3702"/>
    <lineage>
        <taxon>Eukaryota</taxon>
        <taxon>Viridiplantae</taxon>
        <taxon>Streptophyta</taxon>
        <taxon>Embryophyta</taxon>
        <taxon>Tracheophyta</taxon>
        <taxon>Spermatophyta</taxon>
        <taxon>Magnoliopsida</taxon>
        <taxon>eudicotyledons</taxon>
        <taxon>Gunneridae</taxon>
        <taxon>Pentapetalae</taxon>
        <taxon>rosids</taxon>
        <taxon>malvids</taxon>
        <taxon>Brassicales</taxon>
        <taxon>Brassicaceae</taxon>
        <taxon>Camelineae</taxon>
        <taxon>Arabidopsis</taxon>
    </lineage>
</organism>
<gene>
    <name evidence="5" type="primary">SPX2</name>
    <name evidence="8" type="ordered locus">At2g26660</name>
    <name evidence="9" type="ORF">F18A8.3</name>
</gene>
<comment type="function">
    <text evidence="7">May inhibit PHR1 DNA-binding activity in a Pi-dependent manner.</text>
</comment>
<comment type="subcellular location">
    <subcellularLocation>
        <location evidence="3">Nucleus</location>
    </subcellularLocation>
</comment>
<comment type="induction">
    <text evidence="3">Up-regulated under phosphate starvation.</text>
</comment>
<comment type="disruption phenotype">
    <text evidence="4">No effect on Pi accumulation, due to the redundancy with SPX1. Spx1 and spx2 double mutants have an increased root-to-shoot growth ratio and a reduced rot hair size when grown in Pi-sufficient conditions.</text>
</comment>
<comment type="sequence caution" evidence="6">
    <conflict type="erroneous initiation">
        <sequence resource="EMBL-CDS" id="BAC43140"/>
    </conflict>
    <text>Truncated N-terminus.</text>
</comment>
<evidence type="ECO:0000255" key="1">
    <source>
        <dbReference type="PROSITE-ProRule" id="PRU00714"/>
    </source>
</evidence>
<evidence type="ECO:0000256" key="2">
    <source>
        <dbReference type="SAM" id="MobiDB-lite"/>
    </source>
</evidence>
<evidence type="ECO:0000269" key="3">
    <source>
    </source>
</evidence>
<evidence type="ECO:0000269" key="4">
    <source>
    </source>
</evidence>
<evidence type="ECO:0000303" key="5">
    <source>
    </source>
</evidence>
<evidence type="ECO:0000305" key="6"/>
<evidence type="ECO:0000305" key="7">
    <source>
    </source>
</evidence>
<evidence type="ECO:0000312" key="8">
    <source>
        <dbReference type="Araport" id="AT2G26660"/>
    </source>
</evidence>
<evidence type="ECO:0000312" key="9">
    <source>
        <dbReference type="EMBL" id="AAB95300.1"/>
    </source>
</evidence>
<keyword id="KW-0539">Nucleus</keyword>
<keyword id="KW-1185">Reference proteome</keyword>
<dbReference type="EMBL" id="AC003105">
    <property type="protein sequence ID" value="AAB95300.1"/>
    <property type="molecule type" value="Genomic_DNA"/>
</dbReference>
<dbReference type="EMBL" id="CP002685">
    <property type="protein sequence ID" value="AEC07871.1"/>
    <property type="molecule type" value="Genomic_DNA"/>
</dbReference>
<dbReference type="EMBL" id="AK118537">
    <property type="protein sequence ID" value="BAC43140.1"/>
    <property type="status" value="ALT_INIT"/>
    <property type="molecule type" value="mRNA"/>
</dbReference>
<dbReference type="EMBL" id="BT003688">
    <property type="protein sequence ID" value="AAO39916.1"/>
    <property type="molecule type" value="mRNA"/>
</dbReference>
<dbReference type="PIR" id="C84663">
    <property type="entry name" value="C84663"/>
</dbReference>
<dbReference type="RefSeq" id="NP_180234.1">
    <property type="nucleotide sequence ID" value="NM_128223.3"/>
</dbReference>
<dbReference type="SMR" id="O48781"/>
<dbReference type="FunCoup" id="O48781">
    <property type="interactions" value="28"/>
</dbReference>
<dbReference type="STRING" id="3702.O48781"/>
<dbReference type="iPTMnet" id="O48781"/>
<dbReference type="PaxDb" id="3702-AT2G26660.1"/>
<dbReference type="ProteomicsDB" id="245252"/>
<dbReference type="EnsemblPlants" id="AT2G26660.1">
    <property type="protein sequence ID" value="AT2G26660.1"/>
    <property type="gene ID" value="AT2G26660"/>
</dbReference>
<dbReference type="GeneID" id="817207"/>
<dbReference type="Gramene" id="AT2G26660.1">
    <property type="protein sequence ID" value="AT2G26660.1"/>
    <property type="gene ID" value="AT2G26660"/>
</dbReference>
<dbReference type="KEGG" id="ath:AT2G26660"/>
<dbReference type="Araport" id="AT2G26660"/>
<dbReference type="TAIR" id="AT2G26660">
    <property type="gene designation" value="SPX2"/>
</dbReference>
<dbReference type="eggNOG" id="KOG1161">
    <property type="taxonomic scope" value="Eukaryota"/>
</dbReference>
<dbReference type="HOGENOM" id="CLU_057600_1_1_1"/>
<dbReference type="InParanoid" id="O48781"/>
<dbReference type="OMA" id="MTDEADG"/>
<dbReference type="OrthoDB" id="6493944at2759"/>
<dbReference type="PhylomeDB" id="O48781"/>
<dbReference type="PRO" id="PR:O48781"/>
<dbReference type="Proteomes" id="UP000006548">
    <property type="component" value="Chromosome 2"/>
</dbReference>
<dbReference type="ExpressionAtlas" id="O48781">
    <property type="expression patterns" value="baseline and differential"/>
</dbReference>
<dbReference type="GO" id="GO:0005634">
    <property type="term" value="C:nucleus"/>
    <property type="evidence" value="ECO:0000314"/>
    <property type="project" value="TAIR"/>
</dbReference>
<dbReference type="GO" id="GO:0071456">
    <property type="term" value="P:cellular response to hypoxia"/>
    <property type="evidence" value="ECO:0007007"/>
    <property type="project" value="TAIR"/>
</dbReference>
<dbReference type="GO" id="GO:0016036">
    <property type="term" value="P:cellular response to phosphate starvation"/>
    <property type="evidence" value="ECO:0000270"/>
    <property type="project" value="TAIR"/>
</dbReference>
<dbReference type="CDD" id="cd14481">
    <property type="entry name" value="SPX_AtSPX1_like"/>
    <property type="match status" value="1"/>
</dbReference>
<dbReference type="InterPro" id="IPR004331">
    <property type="entry name" value="SPX_dom"/>
</dbReference>
<dbReference type="InterPro" id="IPR031142">
    <property type="entry name" value="SPX_prot"/>
</dbReference>
<dbReference type="PANTHER" id="PTHR45978:SF5">
    <property type="entry name" value="SPX DOMAIN-CONTAINING PROTEIN 2"/>
    <property type="match status" value="1"/>
</dbReference>
<dbReference type="PANTHER" id="PTHR45978">
    <property type="entry name" value="SPX DOMAIN-CONTAINING PROTEIN 3"/>
    <property type="match status" value="1"/>
</dbReference>
<dbReference type="Pfam" id="PF03105">
    <property type="entry name" value="SPX"/>
    <property type="match status" value="3"/>
</dbReference>
<dbReference type="PROSITE" id="PS51382">
    <property type="entry name" value="SPX"/>
    <property type="match status" value="1"/>
</dbReference>
<feature type="chain" id="PRO_0000398343" description="SPX domain-containing protein 2">
    <location>
        <begin position="1"/>
        <end position="287"/>
    </location>
</feature>
<feature type="domain" description="SPX" evidence="1">
    <location>
        <begin position="1"/>
        <end position="162"/>
    </location>
</feature>
<feature type="region of interest" description="Disordered" evidence="2">
    <location>
        <begin position="36"/>
        <end position="61"/>
    </location>
</feature>
<feature type="region of interest" description="Disordered" evidence="2">
    <location>
        <begin position="194"/>
        <end position="213"/>
    </location>
</feature>
<feature type="compositionally biased region" description="Basic and acidic residues" evidence="2">
    <location>
        <begin position="36"/>
        <end position="50"/>
    </location>
</feature>